<reference key="1">
    <citation type="journal article" date="2007" name="PLoS Genet.">
        <title>Patterns and implications of gene gain and loss in the evolution of Prochlorococcus.</title>
        <authorList>
            <person name="Kettler G.C."/>
            <person name="Martiny A.C."/>
            <person name="Huang K."/>
            <person name="Zucker J."/>
            <person name="Coleman M.L."/>
            <person name="Rodrigue S."/>
            <person name="Chen F."/>
            <person name="Lapidus A."/>
            <person name="Ferriera S."/>
            <person name="Johnson J."/>
            <person name="Steglich C."/>
            <person name="Church G.M."/>
            <person name="Richardson P."/>
            <person name="Chisholm S.W."/>
        </authorList>
    </citation>
    <scope>NUCLEOTIDE SEQUENCE [LARGE SCALE GENOMIC DNA]</scope>
    <source>
        <strain>MIT 9515</strain>
    </source>
</reference>
<protein>
    <recommendedName>
        <fullName evidence="1">Adenylate kinase</fullName>
        <shortName evidence="1">AK</shortName>
        <ecNumber evidence="1">2.7.4.3</ecNumber>
    </recommendedName>
    <alternativeName>
        <fullName evidence="1">ATP-AMP transphosphorylase</fullName>
    </alternativeName>
    <alternativeName>
        <fullName evidence="1">ATP:AMP phosphotransferase</fullName>
    </alternativeName>
    <alternativeName>
        <fullName evidence="1">Adenylate monophosphate kinase</fullName>
    </alternativeName>
</protein>
<feature type="chain" id="PRO_1000058876" description="Adenylate kinase">
    <location>
        <begin position="1"/>
        <end position="182"/>
    </location>
</feature>
<feature type="region of interest" description="NMP" evidence="1">
    <location>
        <begin position="32"/>
        <end position="61"/>
    </location>
</feature>
<feature type="region of interest" description="LID" evidence="1">
    <location>
        <begin position="126"/>
        <end position="132"/>
    </location>
</feature>
<feature type="binding site" evidence="1">
    <location>
        <begin position="12"/>
        <end position="17"/>
    </location>
    <ligand>
        <name>ATP</name>
        <dbReference type="ChEBI" id="CHEBI:30616"/>
    </ligand>
</feature>
<feature type="binding site" evidence="1">
    <location>
        <position position="33"/>
    </location>
    <ligand>
        <name>AMP</name>
        <dbReference type="ChEBI" id="CHEBI:456215"/>
    </ligand>
</feature>
<feature type="binding site" evidence="1">
    <location>
        <position position="38"/>
    </location>
    <ligand>
        <name>AMP</name>
        <dbReference type="ChEBI" id="CHEBI:456215"/>
    </ligand>
</feature>
<feature type="binding site" evidence="1">
    <location>
        <begin position="59"/>
        <end position="61"/>
    </location>
    <ligand>
        <name>AMP</name>
        <dbReference type="ChEBI" id="CHEBI:456215"/>
    </ligand>
</feature>
<feature type="binding site" evidence="1">
    <location>
        <begin position="85"/>
        <end position="88"/>
    </location>
    <ligand>
        <name>AMP</name>
        <dbReference type="ChEBI" id="CHEBI:456215"/>
    </ligand>
</feature>
<feature type="binding site" evidence="1">
    <location>
        <position position="92"/>
    </location>
    <ligand>
        <name>AMP</name>
        <dbReference type="ChEBI" id="CHEBI:456215"/>
    </ligand>
</feature>
<feature type="binding site" evidence="1">
    <location>
        <position position="127"/>
    </location>
    <ligand>
        <name>ATP</name>
        <dbReference type="ChEBI" id="CHEBI:30616"/>
    </ligand>
</feature>
<feature type="binding site" evidence="1">
    <location>
        <position position="129"/>
    </location>
    <ligand>
        <name>AMP</name>
        <dbReference type="ChEBI" id="CHEBI:456215"/>
    </ligand>
</feature>
<feature type="binding site" evidence="1">
    <location>
        <position position="140"/>
    </location>
    <ligand>
        <name>AMP</name>
        <dbReference type="ChEBI" id="CHEBI:456215"/>
    </ligand>
</feature>
<feature type="binding site" evidence="1">
    <location>
        <position position="168"/>
    </location>
    <ligand>
        <name>ATP</name>
        <dbReference type="ChEBI" id="CHEBI:30616"/>
    </ligand>
</feature>
<evidence type="ECO:0000255" key="1">
    <source>
        <dbReference type="HAMAP-Rule" id="MF_00235"/>
    </source>
</evidence>
<dbReference type="EC" id="2.7.4.3" evidence="1"/>
<dbReference type="EMBL" id="CP000552">
    <property type="protein sequence ID" value="ABM72928.1"/>
    <property type="molecule type" value="Genomic_DNA"/>
</dbReference>
<dbReference type="RefSeq" id="WP_011821019.1">
    <property type="nucleotide sequence ID" value="NC_008817.1"/>
</dbReference>
<dbReference type="SMR" id="A2BYR7"/>
<dbReference type="STRING" id="167542.P9515_17211"/>
<dbReference type="GeneID" id="60200891"/>
<dbReference type="KEGG" id="pmc:P9515_17211"/>
<dbReference type="eggNOG" id="COG0563">
    <property type="taxonomic scope" value="Bacteria"/>
</dbReference>
<dbReference type="HOGENOM" id="CLU_032354_4_1_3"/>
<dbReference type="OrthoDB" id="9805030at2"/>
<dbReference type="UniPathway" id="UPA00588">
    <property type="reaction ID" value="UER00649"/>
</dbReference>
<dbReference type="Proteomes" id="UP000001589">
    <property type="component" value="Chromosome"/>
</dbReference>
<dbReference type="GO" id="GO:0005737">
    <property type="term" value="C:cytoplasm"/>
    <property type="evidence" value="ECO:0007669"/>
    <property type="project" value="UniProtKB-SubCell"/>
</dbReference>
<dbReference type="GO" id="GO:0004017">
    <property type="term" value="F:adenylate kinase activity"/>
    <property type="evidence" value="ECO:0007669"/>
    <property type="project" value="UniProtKB-UniRule"/>
</dbReference>
<dbReference type="GO" id="GO:0005524">
    <property type="term" value="F:ATP binding"/>
    <property type="evidence" value="ECO:0007669"/>
    <property type="project" value="UniProtKB-UniRule"/>
</dbReference>
<dbReference type="GO" id="GO:0044209">
    <property type="term" value="P:AMP salvage"/>
    <property type="evidence" value="ECO:0007669"/>
    <property type="project" value="UniProtKB-UniRule"/>
</dbReference>
<dbReference type="CDD" id="cd01428">
    <property type="entry name" value="ADK"/>
    <property type="match status" value="1"/>
</dbReference>
<dbReference type="Gene3D" id="3.40.50.300">
    <property type="entry name" value="P-loop containing nucleotide triphosphate hydrolases"/>
    <property type="match status" value="1"/>
</dbReference>
<dbReference type="HAMAP" id="MF_00235">
    <property type="entry name" value="Adenylate_kinase_Adk"/>
    <property type="match status" value="1"/>
</dbReference>
<dbReference type="InterPro" id="IPR000850">
    <property type="entry name" value="Adenylat/UMP-CMP_kin"/>
</dbReference>
<dbReference type="InterPro" id="IPR033690">
    <property type="entry name" value="Adenylat_kinase_CS"/>
</dbReference>
<dbReference type="InterPro" id="IPR027417">
    <property type="entry name" value="P-loop_NTPase"/>
</dbReference>
<dbReference type="NCBIfam" id="NF001381">
    <property type="entry name" value="PRK00279.1-3"/>
    <property type="match status" value="1"/>
</dbReference>
<dbReference type="NCBIfam" id="NF011100">
    <property type="entry name" value="PRK14527.1"/>
    <property type="match status" value="1"/>
</dbReference>
<dbReference type="NCBIfam" id="NF011104">
    <property type="entry name" value="PRK14531.1"/>
    <property type="match status" value="1"/>
</dbReference>
<dbReference type="PANTHER" id="PTHR23359">
    <property type="entry name" value="NUCLEOTIDE KINASE"/>
    <property type="match status" value="1"/>
</dbReference>
<dbReference type="Pfam" id="PF00406">
    <property type="entry name" value="ADK"/>
    <property type="match status" value="1"/>
</dbReference>
<dbReference type="PRINTS" id="PR00094">
    <property type="entry name" value="ADENYLTKNASE"/>
</dbReference>
<dbReference type="SUPFAM" id="SSF52540">
    <property type="entry name" value="P-loop containing nucleoside triphosphate hydrolases"/>
    <property type="match status" value="1"/>
</dbReference>
<dbReference type="PROSITE" id="PS00113">
    <property type="entry name" value="ADENYLATE_KINASE"/>
    <property type="match status" value="1"/>
</dbReference>
<proteinExistence type="inferred from homology"/>
<sequence>MKKHLLFLGPPGAGKGTQAAYLSEANSYLHLSTGELLRKEIDLDTYLGKQVKDIMNKGELVSDQLVLEIVNKNLSKDNKGWILDGYPRNLSQVNSLNEVLMNINQPLEIVFYLDVPDEVLIKRLLLRGRKDDNEETIKTRLKIYKETTEPLIEYYKNLSLLEYINADGDLKTISNDIKQKMA</sequence>
<gene>
    <name evidence="1" type="primary">adk</name>
    <name type="ordered locus">P9515_17211</name>
</gene>
<keyword id="KW-0067">ATP-binding</keyword>
<keyword id="KW-0963">Cytoplasm</keyword>
<keyword id="KW-0418">Kinase</keyword>
<keyword id="KW-0545">Nucleotide biosynthesis</keyword>
<keyword id="KW-0547">Nucleotide-binding</keyword>
<keyword id="KW-0808">Transferase</keyword>
<organism>
    <name type="scientific">Prochlorococcus marinus (strain MIT 9515)</name>
    <dbReference type="NCBI Taxonomy" id="167542"/>
    <lineage>
        <taxon>Bacteria</taxon>
        <taxon>Bacillati</taxon>
        <taxon>Cyanobacteriota</taxon>
        <taxon>Cyanophyceae</taxon>
        <taxon>Synechococcales</taxon>
        <taxon>Prochlorococcaceae</taxon>
        <taxon>Prochlorococcus</taxon>
    </lineage>
</organism>
<name>KAD_PROM5</name>
<accession>A2BYR7</accession>
<comment type="function">
    <text evidence="1">Catalyzes the reversible transfer of the terminal phosphate group between ATP and AMP. Plays an important role in cellular energy homeostasis and in adenine nucleotide metabolism.</text>
</comment>
<comment type="catalytic activity">
    <reaction evidence="1">
        <text>AMP + ATP = 2 ADP</text>
        <dbReference type="Rhea" id="RHEA:12973"/>
        <dbReference type="ChEBI" id="CHEBI:30616"/>
        <dbReference type="ChEBI" id="CHEBI:456215"/>
        <dbReference type="ChEBI" id="CHEBI:456216"/>
        <dbReference type="EC" id="2.7.4.3"/>
    </reaction>
</comment>
<comment type="pathway">
    <text evidence="1">Purine metabolism; AMP biosynthesis via salvage pathway; AMP from ADP: step 1/1.</text>
</comment>
<comment type="subunit">
    <text evidence="1">Monomer.</text>
</comment>
<comment type="subcellular location">
    <subcellularLocation>
        <location evidence="1">Cytoplasm</location>
    </subcellularLocation>
</comment>
<comment type="domain">
    <text evidence="1">Consists of three domains, a large central CORE domain and two small peripheral domains, NMPbind and LID, which undergo movements during catalysis. The LID domain closes over the site of phosphoryl transfer upon ATP binding. Assembling and dissambling the active center during each catalytic cycle provides an effective means to prevent ATP hydrolysis.</text>
</comment>
<comment type="similarity">
    <text evidence="1">Belongs to the adenylate kinase family.</text>
</comment>